<evidence type="ECO:0000250" key="1"/>
<evidence type="ECO:0000255" key="2">
    <source>
        <dbReference type="PROSITE-ProRule" id="PRU00208"/>
    </source>
</evidence>
<evidence type="ECO:0000255" key="3">
    <source>
        <dbReference type="PROSITE-ProRule" id="PRU01024"/>
    </source>
</evidence>
<keyword id="KW-0004">4Fe-4S</keyword>
<keyword id="KW-0408">Iron</keyword>
<keyword id="KW-0411">Iron-sulfur</keyword>
<keyword id="KW-0479">Metal-binding</keyword>
<keyword id="KW-0489">Methyltransferase</keyword>
<keyword id="KW-0949">S-adenosyl-L-methionine</keyword>
<keyword id="KW-0808">Transferase</keyword>
<gene>
    <name type="ordered locus">LMOf2365_1776</name>
</gene>
<feature type="chain" id="PRO_0000162000" description="Uncharacterized RNA methyltransferase LMOf2365_1776">
    <location>
        <begin position="1"/>
        <end position="453"/>
    </location>
</feature>
<feature type="domain" description="TRAM" evidence="2">
    <location>
        <begin position="5"/>
        <end position="63"/>
    </location>
</feature>
<feature type="active site" description="Nucleophile" evidence="3">
    <location>
        <position position="410"/>
    </location>
</feature>
<feature type="binding site" evidence="1">
    <location>
        <position position="76"/>
    </location>
    <ligand>
        <name>[4Fe-4S] cluster</name>
        <dbReference type="ChEBI" id="CHEBI:49883"/>
    </ligand>
</feature>
<feature type="binding site" evidence="1">
    <location>
        <position position="82"/>
    </location>
    <ligand>
        <name>[4Fe-4S] cluster</name>
        <dbReference type="ChEBI" id="CHEBI:49883"/>
    </ligand>
</feature>
<feature type="binding site" evidence="1">
    <location>
        <position position="85"/>
    </location>
    <ligand>
        <name>[4Fe-4S] cluster</name>
        <dbReference type="ChEBI" id="CHEBI:49883"/>
    </ligand>
</feature>
<feature type="binding site" evidence="1">
    <location>
        <position position="162"/>
    </location>
    <ligand>
        <name>[4Fe-4S] cluster</name>
        <dbReference type="ChEBI" id="CHEBI:49883"/>
    </ligand>
</feature>
<feature type="binding site" evidence="3">
    <location>
        <position position="285"/>
    </location>
    <ligand>
        <name>S-adenosyl-L-methionine</name>
        <dbReference type="ChEBI" id="CHEBI:59789"/>
    </ligand>
</feature>
<feature type="binding site" evidence="3">
    <location>
        <position position="314"/>
    </location>
    <ligand>
        <name>S-adenosyl-L-methionine</name>
        <dbReference type="ChEBI" id="CHEBI:59789"/>
    </ligand>
</feature>
<feature type="binding site" evidence="3">
    <location>
        <position position="335"/>
    </location>
    <ligand>
        <name>S-adenosyl-L-methionine</name>
        <dbReference type="ChEBI" id="CHEBI:59789"/>
    </ligand>
</feature>
<feature type="binding site" evidence="3">
    <location>
        <position position="383"/>
    </location>
    <ligand>
        <name>S-adenosyl-L-methionine</name>
        <dbReference type="ChEBI" id="CHEBI:59789"/>
    </ligand>
</feature>
<reference key="1">
    <citation type="journal article" date="2004" name="Nucleic Acids Res.">
        <title>Whole genome comparisons of serotype 4b and 1/2a strains of the food-borne pathogen Listeria monocytogenes reveal new insights into the core genome components of this species.</title>
        <authorList>
            <person name="Nelson K.E."/>
            <person name="Fouts D.E."/>
            <person name="Mongodin E.F."/>
            <person name="Ravel J."/>
            <person name="DeBoy R.T."/>
            <person name="Kolonay J.F."/>
            <person name="Rasko D.A."/>
            <person name="Angiuoli S.V."/>
            <person name="Gill S.R."/>
            <person name="Paulsen I.T."/>
            <person name="Peterson J.D."/>
            <person name="White O."/>
            <person name="Nelson W.C."/>
            <person name="Nierman W.C."/>
            <person name="Beanan M.J."/>
            <person name="Brinkac L.M."/>
            <person name="Daugherty S.C."/>
            <person name="Dodson R.J."/>
            <person name="Durkin A.S."/>
            <person name="Madupu R."/>
            <person name="Haft D.H."/>
            <person name="Selengut J."/>
            <person name="Van Aken S.E."/>
            <person name="Khouri H.M."/>
            <person name="Fedorova N."/>
            <person name="Forberger H.A."/>
            <person name="Tran B."/>
            <person name="Kathariou S."/>
            <person name="Wonderling L.D."/>
            <person name="Uhlich G.A."/>
            <person name="Bayles D.O."/>
            <person name="Luchansky J.B."/>
            <person name="Fraser C.M."/>
        </authorList>
    </citation>
    <scope>NUCLEOTIDE SEQUENCE [LARGE SCALE GENOMIC DNA]</scope>
    <source>
        <strain>F2365</strain>
    </source>
</reference>
<organism>
    <name type="scientific">Listeria monocytogenes serotype 4b (strain F2365)</name>
    <dbReference type="NCBI Taxonomy" id="265669"/>
    <lineage>
        <taxon>Bacteria</taxon>
        <taxon>Bacillati</taxon>
        <taxon>Bacillota</taxon>
        <taxon>Bacilli</taxon>
        <taxon>Bacillales</taxon>
        <taxon>Listeriaceae</taxon>
        <taxon>Listeria</taxon>
    </lineage>
</organism>
<protein>
    <recommendedName>
        <fullName>Uncharacterized RNA methyltransferase LMOf2365_1776</fullName>
        <ecNumber>2.1.1.-</ecNumber>
    </recommendedName>
</protein>
<accession>Q71YR7</accession>
<sequence>MEASLLKKNQSIELTIEDLTHDGSGVGKIDGYPLFIPNTLPGEKVTAKIIKLNKNYGFARMENIETVSADRVEPPCAVYSKCGGCSLQHLSYDGQLEFKRNQVEETMKRIGKLNVEVPETLGMENPWRYRNKSQVPVGFVNGKLTAGFYQKRSHAIIDMSTCLIHNEQGDFAVQKTREILAKYGTEPYDEQTGKGDIRHIMTRFAHTTGQLMIVLVTTKERMPFKEEIVRELVEQLELTSIVQNINPHKTNVIFGDRTKTLWGKDIIEDTIHGIRFAISARSFYQVNPIQTEVLYQQAIDAAELTGEETVIDAYCGIGSISLCLAKKAKHVYGVEIVDQAIQDARANAELNELANTTFETGKAEEVIPAWYKAGIVADVLVVDPPRKGCDEKLLETILAMKPKKVVYVSCNPGTLARDMKILTDGGYVAKKVQPVDMFPMTTHIEAVTVLHLN</sequence>
<proteinExistence type="inferred from homology"/>
<dbReference type="EC" id="2.1.1.-"/>
<dbReference type="EMBL" id="AE017262">
    <property type="protein sequence ID" value="AAT04547.1"/>
    <property type="molecule type" value="Genomic_DNA"/>
</dbReference>
<dbReference type="SMR" id="Q71YR7"/>
<dbReference type="KEGG" id="lmf:LMOf2365_1776"/>
<dbReference type="HOGENOM" id="CLU_014689_7_0_9"/>
<dbReference type="GO" id="GO:0051539">
    <property type="term" value="F:4 iron, 4 sulfur cluster binding"/>
    <property type="evidence" value="ECO:0007669"/>
    <property type="project" value="UniProtKB-KW"/>
</dbReference>
<dbReference type="GO" id="GO:0046872">
    <property type="term" value="F:metal ion binding"/>
    <property type="evidence" value="ECO:0007669"/>
    <property type="project" value="UniProtKB-KW"/>
</dbReference>
<dbReference type="GO" id="GO:0070041">
    <property type="term" value="F:rRNA (uridine-C5-)-methyltransferase activity"/>
    <property type="evidence" value="ECO:0007669"/>
    <property type="project" value="TreeGrafter"/>
</dbReference>
<dbReference type="GO" id="GO:0070475">
    <property type="term" value="P:rRNA base methylation"/>
    <property type="evidence" value="ECO:0007669"/>
    <property type="project" value="TreeGrafter"/>
</dbReference>
<dbReference type="CDD" id="cd02440">
    <property type="entry name" value="AdoMet_MTases"/>
    <property type="match status" value="1"/>
</dbReference>
<dbReference type="FunFam" id="3.40.50.150:FF:000009">
    <property type="entry name" value="23S rRNA (Uracil(1939)-C(5))-methyltransferase RlmD"/>
    <property type="match status" value="1"/>
</dbReference>
<dbReference type="FunFam" id="2.40.50.140:FF:000097">
    <property type="entry name" value="23S rRNA (uracil(1939)-C(5))-methyltransferase RlmD"/>
    <property type="match status" value="1"/>
</dbReference>
<dbReference type="FunFam" id="2.40.50.1070:FF:000003">
    <property type="entry name" value="23S rRNA (Uracil-5-)-methyltransferase RumA"/>
    <property type="match status" value="1"/>
</dbReference>
<dbReference type="Gene3D" id="2.40.50.1070">
    <property type="match status" value="1"/>
</dbReference>
<dbReference type="Gene3D" id="2.40.50.140">
    <property type="entry name" value="Nucleic acid-binding proteins"/>
    <property type="match status" value="1"/>
</dbReference>
<dbReference type="Gene3D" id="3.40.50.150">
    <property type="entry name" value="Vaccinia Virus protein VP39"/>
    <property type="match status" value="1"/>
</dbReference>
<dbReference type="InterPro" id="IPR030390">
    <property type="entry name" value="MeTrfase_TrmA_AS"/>
</dbReference>
<dbReference type="InterPro" id="IPR030391">
    <property type="entry name" value="MeTrfase_TrmA_CS"/>
</dbReference>
<dbReference type="InterPro" id="IPR012340">
    <property type="entry name" value="NA-bd_OB-fold"/>
</dbReference>
<dbReference type="InterPro" id="IPR029063">
    <property type="entry name" value="SAM-dependent_MTases_sf"/>
</dbReference>
<dbReference type="InterPro" id="IPR002792">
    <property type="entry name" value="TRAM_dom"/>
</dbReference>
<dbReference type="InterPro" id="IPR010280">
    <property type="entry name" value="U5_MeTrfase_fam"/>
</dbReference>
<dbReference type="NCBIfam" id="TIGR00479">
    <property type="entry name" value="rumA"/>
    <property type="match status" value="1"/>
</dbReference>
<dbReference type="PANTHER" id="PTHR11061">
    <property type="entry name" value="RNA M5U METHYLTRANSFERASE"/>
    <property type="match status" value="1"/>
</dbReference>
<dbReference type="PANTHER" id="PTHR11061:SF30">
    <property type="entry name" value="TRNA (URACIL(54)-C(5))-METHYLTRANSFERASE"/>
    <property type="match status" value="1"/>
</dbReference>
<dbReference type="Pfam" id="PF01938">
    <property type="entry name" value="TRAM"/>
    <property type="match status" value="1"/>
</dbReference>
<dbReference type="Pfam" id="PF05958">
    <property type="entry name" value="tRNA_U5-meth_tr"/>
    <property type="match status" value="1"/>
</dbReference>
<dbReference type="SUPFAM" id="SSF50249">
    <property type="entry name" value="Nucleic acid-binding proteins"/>
    <property type="match status" value="1"/>
</dbReference>
<dbReference type="SUPFAM" id="SSF53335">
    <property type="entry name" value="S-adenosyl-L-methionine-dependent methyltransferases"/>
    <property type="match status" value="1"/>
</dbReference>
<dbReference type="PROSITE" id="PS51687">
    <property type="entry name" value="SAM_MT_RNA_M5U"/>
    <property type="match status" value="1"/>
</dbReference>
<dbReference type="PROSITE" id="PS50926">
    <property type="entry name" value="TRAM"/>
    <property type="match status" value="1"/>
</dbReference>
<dbReference type="PROSITE" id="PS01230">
    <property type="entry name" value="TRMA_1"/>
    <property type="match status" value="1"/>
</dbReference>
<dbReference type="PROSITE" id="PS01231">
    <property type="entry name" value="TRMA_2"/>
    <property type="match status" value="1"/>
</dbReference>
<name>Y1776_LISMF</name>
<comment type="similarity">
    <text evidence="3">Belongs to the class I-like SAM-binding methyltransferase superfamily. RNA M5U methyltransferase family.</text>
</comment>